<protein>
    <recommendedName>
        <fullName evidence="1">Ribonuclease BN</fullName>
        <shortName evidence="1">RNase BN</shortName>
        <ecNumber evidence="1">3.1.-.-</ecNumber>
    </recommendedName>
    <alternativeName>
        <fullName evidence="1">Ribonuclease Z homolog</fullName>
        <shortName evidence="1">RNase Z homolog</shortName>
    </alternativeName>
</protein>
<dbReference type="EC" id="3.1.-.-" evidence="1"/>
<dbReference type="EMBL" id="CP000800">
    <property type="protein sequence ID" value="ABV20209.1"/>
    <property type="molecule type" value="Genomic_DNA"/>
</dbReference>
<dbReference type="RefSeq" id="WP_001326256.1">
    <property type="nucleotide sequence ID" value="NC_009801.1"/>
</dbReference>
<dbReference type="SMR" id="A7ZP87"/>
<dbReference type="GeneID" id="75205681"/>
<dbReference type="KEGG" id="ecw:EcE24377A_2565"/>
<dbReference type="HOGENOM" id="CLU_031317_2_0_6"/>
<dbReference type="Proteomes" id="UP000001122">
    <property type="component" value="Chromosome"/>
</dbReference>
<dbReference type="GO" id="GO:0042781">
    <property type="term" value="F:3'-tRNA processing endoribonuclease activity"/>
    <property type="evidence" value="ECO:0007669"/>
    <property type="project" value="TreeGrafter"/>
</dbReference>
<dbReference type="GO" id="GO:0004527">
    <property type="term" value="F:exonuclease activity"/>
    <property type="evidence" value="ECO:0007669"/>
    <property type="project" value="UniProtKB-UniRule"/>
</dbReference>
<dbReference type="GO" id="GO:0008270">
    <property type="term" value="F:zinc ion binding"/>
    <property type="evidence" value="ECO:0007669"/>
    <property type="project" value="UniProtKB-UniRule"/>
</dbReference>
<dbReference type="CDD" id="cd07717">
    <property type="entry name" value="RNaseZ_ZiPD-like_MBL-fold"/>
    <property type="match status" value="1"/>
</dbReference>
<dbReference type="FunFam" id="3.60.15.10:FF:000002">
    <property type="entry name" value="Ribonuclease Z"/>
    <property type="match status" value="1"/>
</dbReference>
<dbReference type="Gene3D" id="3.60.15.10">
    <property type="entry name" value="Ribonuclease Z/Hydroxyacylglutathione hydrolase-like"/>
    <property type="match status" value="1"/>
</dbReference>
<dbReference type="HAMAP" id="MF_01818">
    <property type="entry name" value="RNase_Z_BN"/>
    <property type="match status" value="1"/>
</dbReference>
<dbReference type="InterPro" id="IPR001279">
    <property type="entry name" value="Metallo-B-lactamas"/>
</dbReference>
<dbReference type="InterPro" id="IPR036866">
    <property type="entry name" value="RibonucZ/Hydroxyglut_hydro"/>
</dbReference>
<dbReference type="InterPro" id="IPR013469">
    <property type="entry name" value="Rnase_BN"/>
</dbReference>
<dbReference type="InterPro" id="IPR013471">
    <property type="entry name" value="RNase_Z/BN"/>
</dbReference>
<dbReference type="NCBIfam" id="NF000800">
    <property type="entry name" value="PRK00055.1-1"/>
    <property type="match status" value="1"/>
</dbReference>
<dbReference type="NCBIfam" id="NF000801">
    <property type="entry name" value="PRK00055.1-3"/>
    <property type="match status" value="1"/>
</dbReference>
<dbReference type="NCBIfam" id="TIGR02651">
    <property type="entry name" value="RNase_Z"/>
    <property type="match status" value="1"/>
</dbReference>
<dbReference type="NCBIfam" id="TIGR02649">
    <property type="entry name" value="true_RNase_BN"/>
    <property type="match status" value="1"/>
</dbReference>
<dbReference type="PANTHER" id="PTHR46018">
    <property type="entry name" value="ZINC PHOSPHODIESTERASE ELAC PROTEIN 1"/>
    <property type="match status" value="1"/>
</dbReference>
<dbReference type="PANTHER" id="PTHR46018:SF2">
    <property type="entry name" value="ZINC PHOSPHODIESTERASE ELAC PROTEIN 1"/>
    <property type="match status" value="1"/>
</dbReference>
<dbReference type="Pfam" id="PF12706">
    <property type="entry name" value="Lactamase_B_2"/>
    <property type="match status" value="1"/>
</dbReference>
<dbReference type="SMART" id="SM00849">
    <property type="entry name" value="Lactamase_B"/>
    <property type="match status" value="1"/>
</dbReference>
<dbReference type="SUPFAM" id="SSF56281">
    <property type="entry name" value="Metallo-hydrolase/oxidoreductase"/>
    <property type="match status" value="1"/>
</dbReference>
<organism>
    <name type="scientific">Escherichia coli O139:H28 (strain E24377A / ETEC)</name>
    <dbReference type="NCBI Taxonomy" id="331111"/>
    <lineage>
        <taxon>Bacteria</taxon>
        <taxon>Pseudomonadati</taxon>
        <taxon>Pseudomonadota</taxon>
        <taxon>Gammaproteobacteria</taxon>
        <taxon>Enterobacterales</taxon>
        <taxon>Enterobacteriaceae</taxon>
        <taxon>Escherichia</taxon>
    </lineage>
</organism>
<reference key="1">
    <citation type="journal article" date="2008" name="J. Bacteriol.">
        <title>The pangenome structure of Escherichia coli: comparative genomic analysis of E. coli commensal and pathogenic isolates.</title>
        <authorList>
            <person name="Rasko D.A."/>
            <person name="Rosovitz M.J."/>
            <person name="Myers G.S.A."/>
            <person name="Mongodin E.F."/>
            <person name="Fricke W.F."/>
            <person name="Gajer P."/>
            <person name="Crabtree J."/>
            <person name="Sebaihia M."/>
            <person name="Thomson N.R."/>
            <person name="Chaudhuri R."/>
            <person name="Henderson I.R."/>
            <person name="Sperandio V."/>
            <person name="Ravel J."/>
        </authorList>
    </citation>
    <scope>NUCLEOTIDE SEQUENCE [LARGE SCALE GENOMIC DNA]</scope>
    <source>
        <strain>E24377A / ETEC</strain>
    </source>
</reference>
<evidence type="ECO:0000255" key="1">
    <source>
        <dbReference type="HAMAP-Rule" id="MF_01818"/>
    </source>
</evidence>
<keyword id="KW-0255">Endonuclease</keyword>
<keyword id="KW-0269">Exonuclease</keyword>
<keyword id="KW-0378">Hydrolase</keyword>
<keyword id="KW-0479">Metal-binding</keyword>
<keyword id="KW-0540">Nuclease</keyword>
<keyword id="KW-1185">Reference proteome</keyword>
<keyword id="KW-0819">tRNA processing</keyword>
<keyword id="KW-0862">Zinc</keyword>
<accession>A7ZP87</accession>
<sequence length="305" mass="32933">MELIFLGTSAGVPTRTRNVTAILLNLQHPTQSGLWLFDCGEGTQHQLLHTAFNPGKLDKIFISHLHGDHLFGLPGLLCSRSMSGIIQPLTIYGPQGIREFVETALRISGSWTDYPLEIVEIGAGEILDDGLRKVTAYPLEHPLECYGYRIEEHDKPGALNAQALKAAGVPPGPLFQELKAGKTITLEDGRQINGADYLAAPVPGKALAIFGDTGPCDAALDLAKGVDVMVHEATLDITMEAKANSRGHSSTRQAATLAREAGVGMLIITHVSSRYDDKGCQHLLRECRSIFPATELANDFTVFNV</sequence>
<proteinExistence type="inferred from homology"/>
<name>RBN_ECO24</name>
<feature type="chain" id="PRO_1000070275" description="Ribonuclease BN">
    <location>
        <begin position="1"/>
        <end position="305"/>
    </location>
</feature>
<feature type="active site" description="Proton acceptor" evidence="1">
    <location>
        <position position="68"/>
    </location>
</feature>
<feature type="binding site" evidence="1">
    <location>
        <position position="64"/>
    </location>
    <ligand>
        <name>Zn(2+)</name>
        <dbReference type="ChEBI" id="CHEBI:29105"/>
        <label>1</label>
        <note>catalytic</note>
    </ligand>
</feature>
<feature type="binding site" evidence="1">
    <location>
        <position position="66"/>
    </location>
    <ligand>
        <name>Zn(2+)</name>
        <dbReference type="ChEBI" id="CHEBI:29105"/>
        <label>1</label>
        <note>catalytic</note>
    </ligand>
</feature>
<feature type="binding site" evidence="1">
    <location>
        <position position="68"/>
    </location>
    <ligand>
        <name>Zn(2+)</name>
        <dbReference type="ChEBI" id="CHEBI:29105"/>
        <label>2</label>
        <note>catalytic</note>
    </ligand>
</feature>
<feature type="binding site" evidence="1">
    <location>
        <position position="69"/>
    </location>
    <ligand>
        <name>Zn(2+)</name>
        <dbReference type="ChEBI" id="CHEBI:29105"/>
        <label>2</label>
        <note>catalytic</note>
    </ligand>
</feature>
<feature type="binding site" evidence="1">
    <location>
        <position position="141"/>
    </location>
    <ligand>
        <name>Zn(2+)</name>
        <dbReference type="ChEBI" id="CHEBI:29105"/>
        <label>1</label>
        <note>catalytic</note>
    </ligand>
</feature>
<feature type="binding site" evidence="1">
    <location>
        <position position="212"/>
    </location>
    <ligand>
        <name>Zn(2+)</name>
        <dbReference type="ChEBI" id="CHEBI:29105"/>
        <label>1</label>
        <note>catalytic</note>
    </ligand>
</feature>
<feature type="binding site" evidence="1">
    <location>
        <position position="212"/>
    </location>
    <ligand>
        <name>Zn(2+)</name>
        <dbReference type="ChEBI" id="CHEBI:29105"/>
        <label>2</label>
        <note>catalytic</note>
    </ligand>
</feature>
<feature type="binding site" evidence="1">
    <location>
        <position position="270"/>
    </location>
    <ligand>
        <name>Zn(2+)</name>
        <dbReference type="ChEBI" id="CHEBI:29105"/>
        <label>2</label>
        <note>catalytic</note>
    </ligand>
</feature>
<comment type="function">
    <text evidence="1">Zinc phosphodiesterase, which has both exoribonuclease and endoribonuclease activities.</text>
</comment>
<comment type="cofactor">
    <cofactor evidence="1">
        <name>Zn(2+)</name>
        <dbReference type="ChEBI" id="CHEBI:29105"/>
    </cofactor>
    <text evidence="1">Binds 2 Zn(2+) ions.</text>
</comment>
<comment type="subunit">
    <text evidence="1">Homodimer.</text>
</comment>
<comment type="similarity">
    <text evidence="1">Belongs to the RNase Z family. RNase BN subfamily.</text>
</comment>
<gene>
    <name evidence="1" type="primary">rbn</name>
    <name type="synonym">rnz</name>
    <name type="ordered locus">EcE24377A_2565</name>
</gene>